<accession>Q8W1E3</accession>
<accession>Q4ACT9</accession>
<accession>Q9FJJ9</accession>
<name>CDF1_ARATH</name>
<proteinExistence type="evidence at protein level"/>
<feature type="chain" id="PRO_0000074295" description="Cyclic dof factor 1">
    <location>
        <begin position="1"/>
        <end position="298"/>
    </location>
</feature>
<feature type="zinc finger region" description="Dof-type" evidence="1">
    <location>
        <begin position="54"/>
        <end position="108"/>
    </location>
</feature>
<feature type="region of interest" description="Disordered" evidence="2">
    <location>
        <begin position="27"/>
        <end position="46"/>
    </location>
</feature>
<feature type="region of interest" description="Disordered" evidence="2">
    <location>
        <begin position="200"/>
        <end position="231"/>
    </location>
</feature>
<feature type="compositionally biased region" description="Basic and acidic residues" evidence="2">
    <location>
        <begin position="210"/>
        <end position="219"/>
    </location>
</feature>
<feature type="binding site" evidence="1">
    <location>
        <position position="56"/>
    </location>
    <ligand>
        <name>Zn(2+)</name>
        <dbReference type="ChEBI" id="CHEBI:29105"/>
    </ligand>
</feature>
<feature type="binding site" evidence="1">
    <location>
        <position position="59"/>
    </location>
    <ligand>
        <name>Zn(2+)</name>
        <dbReference type="ChEBI" id="CHEBI:29105"/>
    </ligand>
</feature>
<feature type="binding site" evidence="1">
    <location>
        <position position="81"/>
    </location>
    <ligand>
        <name>Zn(2+)</name>
        <dbReference type="ChEBI" id="CHEBI:29105"/>
    </ligand>
</feature>
<feature type="binding site" evidence="1">
    <location>
        <position position="84"/>
    </location>
    <ligand>
        <name>Zn(2+)</name>
        <dbReference type="ChEBI" id="CHEBI:29105"/>
    </ligand>
</feature>
<feature type="splice variant" id="VSP_011870" description="In isoform 2." evidence="7">
    <location>
        <begin position="1"/>
        <end position="61"/>
    </location>
</feature>
<feature type="mutagenesis site" description="Reduced binding to ADO3 and increased stability." evidence="3">
    <original>K</original>
    <variation>A</variation>
    <location>
        <position position="253"/>
    </location>
</feature>
<feature type="sequence conflict" description="In Ref. 4; AAL48235/AAN28769." evidence="8" ref="4">
    <original>C</original>
    <variation>Y</variation>
    <location>
        <position position="84"/>
    </location>
</feature>
<sequence>MLETKDPAIKLFGMKIPFPTVLEVADEEEEKNQNKTLTDQSEKDKTLKKPTKILPCPRCNSMETKFCYYNNYNVNQPRHFCKACQRYWTSGGTMRSVPIGAGRRKNKNNSPTSHYHHVTISETNGPVLSFSLGDDQKVSSNRFGNQKLVARIENNDERSNNNTSNGLNCFPGVSWPYTWNPAFYPVYPYWSMPVLSSPVSSSPTSTLGKHSRDEDETVKQKQRNGSVLVPKTLRIDDPNEAAKSSIWTTLGIKNEVMFNGFGSKKEVKLSNKEETETSLVLCANPAALSRSINFHEQM</sequence>
<reference key="1">
    <citation type="journal article" date="2005" name="Science">
        <title>FKF1 F-box protein mediates cyclic degradation of a repressor of CONSTANS in Arabidopsis.</title>
        <authorList>
            <person name="Imaizumi T."/>
            <person name="Schultz T.F."/>
            <person name="Harmon F.G."/>
            <person name="Ho L.A."/>
            <person name="Kay S.A."/>
        </authorList>
    </citation>
    <scope>NUCLEOTIDE SEQUENCE [MRNA] (ISOFORM 1)</scope>
    <scope>FUNCTION</scope>
    <scope>DNA-BINDING</scope>
    <scope>INTERACTION WITH ADO3</scope>
    <scope>INDUCTION</scope>
    <scope>MUTAGENESIS OF LYS-253</scope>
    <scope>SUBCELLULAR LOCATION</scope>
    <scope>TISSUE SPECIFICITY</scope>
</reference>
<reference key="2">
    <citation type="journal article" date="1998" name="DNA Res.">
        <title>Structural analysis of Arabidopsis thaliana chromosome 5. VII. Sequence features of the regions of 1,013,767 bp covered by sixteen physically assigned P1 and TAC clones.</title>
        <authorList>
            <person name="Nakamura Y."/>
            <person name="Sato S."/>
            <person name="Asamizu E."/>
            <person name="Kaneko T."/>
            <person name="Kotani H."/>
            <person name="Miyajima N."/>
            <person name="Tabata S."/>
        </authorList>
    </citation>
    <scope>NUCLEOTIDE SEQUENCE [LARGE SCALE GENOMIC DNA]</scope>
    <source>
        <strain>cv. Columbia</strain>
    </source>
</reference>
<reference key="3">
    <citation type="journal article" date="2017" name="Plant J.">
        <title>Araport11: a complete reannotation of the Arabidopsis thaliana reference genome.</title>
        <authorList>
            <person name="Cheng C.Y."/>
            <person name="Krishnakumar V."/>
            <person name="Chan A.P."/>
            <person name="Thibaud-Nissen F."/>
            <person name="Schobel S."/>
            <person name="Town C.D."/>
        </authorList>
    </citation>
    <scope>GENOME REANNOTATION</scope>
    <source>
        <strain>cv. Columbia</strain>
    </source>
</reference>
<reference key="4">
    <citation type="journal article" date="2003" name="Science">
        <title>Empirical analysis of transcriptional activity in the Arabidopsis genome.</title>
        <authorList>
            <person name="Yamada K."/>
            <person name="Lim J."/>
            <person name="Dale J.M."/>
            <person name="Chen H."/>
            <person name="Shinn P."/>
            <person name="Palm C.J."/>
            <person name="Southwick A.M."/>
            <person name="Wu H.C."/>
            <person name="Kim C.J."/>
            <person name="Nguyen M."/>
            <person name="Pham P.K."/>
            <person name="Cheuk R.F."/>
            <person name="Karlin-Newmann G."/>
            <person name="Liu S.X."/>
            <person name="Lam B."/>
            <person name="Sakano H."/>
            <person name="Wu T."/>
            <person name="Yu G."/>
            <person name="Miranda M."/>
            <person name="Quach H.L."/>
            <person name="Tripp M."/>
            <person name="Chang C.H."/>
            <person name="Lee J.M."/>
            <person name="Toriumi M.J."/>
            <person name="Chan M.M."/>
            <person name="Tang C.C."/>
            <person name="Onodera C.S."/>
            <person name="Deng J.M."/>
            <person name="Akiyama K."/>
            <person name="Ansari Y."/>
            <person name="Arakawa T."/>
            <person name="Banh J."/>
            <person name="Banno F."/>
            <person name="Bowser L."/>
            <person name="Brooks S.Y."/>
            <person name="Carninci P."/>
            <person name="Chao Q."/>
            <person name="Choy N."/>
            <person name="Enju A."/>
            <person name="Goldsmith A.D."/>
            <person name="Gurjal M."/>
            <person name="Hansen N.F."/>
            <person name="Hayashizaki Y."/>
            <person name="Johnson-Hopson C."/>
            <person name="Hsuan V.W."/>
            <person name="Iida K."/>
            <person name="Karnes M."/>
            <person name="Khan S."/>
            <person name="Koesema E."/>
            <person name="Ishida J."/>
            <person name="Jiang P.X."/>
            <person name="Jones T."/>
            <person name="Kawai J."/>
            <person name="Kamiya A."/>
            <person name="Meyers C."/>
            <person name="Nakajima M."/>
            <person name="Narusaka M."/>
            <person name="Seki M."/>
            <person name="Sakurai T."/>
            <person name="Satou M."/>
            <person name="Tamse R."/>
            <person name="Vaysberg M."/>
            <person name="Wallender E.K."/>
            <person name="Wong C."/>
            <person name="Yamamura Y."/>
            <person name="Yuan S."/>
            <person name="Shinozaki K."/>
            <person name="Davis R.W."/>
            <person name="Theologis A."/>
            <person name="Ecker J.R."/>
        </authorList>
    </citation>
    <scope>NUCLEOTIDE SEQUENCE [LARGE SCALE MRNA] (ISOFORM 2)</scope>
    <source>
        <strain>cv. Columbia</strain>
    </source>
</reference>
<reference key="5">
    <citation type="journal article" date="2002" name="Trends Plant Sci.">
        <title>The Dof family of plant transcription factors.</title>
        <authorList>
            <person name="Yanagisawa S."/>
        </authorList>
    </citation>
    <scope>GENE FAMILY</scope>
    <scope>NOMENCLATURE</scope>
</reference>
<reference key="6">
    <citation type="journal article" date="2007" name="Science">
        <title>FKF1 and GIGANTEA complex formation is required for day-length measurement in Arabidopsis.</title>
        <authorList>
            <person name="Sawa M."/>
            <person name="Nusinow D.A."/>
            <person name="Kay S.A."/>
            <person name="Imaizumi T."/>
        </authorList>
    </citation>
    <scope>INTERACTION WITH GI</scope>
</reference>
<reference key="7">
    <citation type="journal article" date="2009" name="Dev. Cell">
        <title>Arabidopsis DOF transcription factors act redundantly to reduce CONSTANS expression and are essential for a photoperiodic flowering response.</title>
        <authorList>
            <person name="Fornara F."/>
            <person name="Panigrahi K.C."/>
            <person name="Gissot L."/>
            <person name="Sauerbrunn N."/>
            <person name="Ruehl M."/>
            <person name="Jarillo J.A."/>
            <person name="Coupland G."/>
        </authorList>
    </citation>
    <scope>FUNCTION</scope>
</reference>
<reference key="8">
    <citation type="journal article" date="2012" name="Science">
        <title>FKF1 conveys timing information for CONSTANS stabilization in photoperiodic flowering.</title>
        <authorList>
            <person name="Song Y.H."/>
            <person name="Smith R.W."/>
            <person name="To B.J."/>
            <person name="Millar A.J."/>
            <person name="Imaizumi T."/>
        </authorList>
    </citation>
    <scope>FUNCTION</scope>
</reference>
<organism>
    <name type="scientific">Arabidopsis thaliana</name>
    <name type="common">Mouse-ear cress</name>
    <dbReference type="NCBI Taxonomy" id="3702"/>
    <lineage>
        <taxon>Eukaryota</taxon>
        <taxon>Viridiplantae</taxon>
        <taxon>Streptophyta</taxon>
        <taxon>Embryophyta</taxon>
        <taxon>Tracheophyta</taxon>
        <taxon>Spermatophyta</taxon>
        <taxon>Magnoliopsida</taxon>
        <taxon>eudicotyledons</taxon>
        <taxon>Gunneridae</taxon>
        <taxon>Pentapetalae</taxon>
        <taxon>rosids</taxon>
        <taxon>malvids</taxon>
        <taxon>Brassicales</taxon>
        <taxon>Brassicaceae</taxon>
        <taxon>Camelineae</taxon>
        <taxon>Arabidopsis</taxon>
    </lineage>
</organism>
<comment type="function">
    <text evidence="3 5 6">Transcription factor that binds specifically to a 5'-AA[AG]G-3' consensus core sequence. A flanking TGT sequence contributes to the specificity of binding. Regulates a photoperiodic flowering response. Transcriptional repressor of 'CONSTANS' expression. The DNA-binding ability is not modulated by 'GIGANTEA' but the stability of CDF1 is controlled by the proteasome-dependent pathway. Ubiquitinated by the SCF(ADO3) E3 ubiquitin ligase complex. Binds to the FT promoter in the morning.</text>
</comment>
<comment type="subunit">
    <text evidence="3 4">Interacts with ADO2 (via kelch repeats), ADO3 (via kelch repeats) and GI (via N-terminus).</text>
</comment>
<comment type="interaction">
    <interactant intactId="EBI-1536051">
        <id>Q8W1E3</id>
    </interactant>
    <interactant intactId="EBI-1015688">
        <id>Q8W420</id>
        <label>ADO2</label>
    </interactant>
    <organismsDiffer>false</organismsDiffer>
    <experiments>2</experiments>
</comment>
<comment type="interaction">
    <interactant intactId="EBI-1536051">
        <id>Q8W1E3</id>
    </interactant>
    <interactant intactId="EBI-401228">
        <id>Q9C9W9</id>
        <label>ADO3</label>
    </interactant>
    <organismsDiffer>false</organismsDiffer>
    <experiments>2</experiments>
</comment>
<comment type="interaction">
    <interactant intactId="EBI-1536051">
        <id>Q8W1E3</id>
    </interactant>
    <interactant intactId="EBI-446380">
        <id>Q9SQI2</id>
        <label>GI</label>
    </interactant>
    <organismsDiffer>false</organismsDiffer>
    <experiments>3</experiments>
</comment>
<comment type="subcellular location">
    <subcellularLocation>
        <location evidence="1 3">Nucleus</location>
    </subcellularLocation>
</comment>
<comment type="alternative products">
    <event type="alternative splicing"/>
    <isoform>
        <id>Q8W1E3-1</id>
        <name>1</name>
        <sequence type="displayed"/>
    </isoform>
    <isoform>
        <id>Q8W1E3-2</id>
        <name>2</name>
        <sequence type="described" ref="VSP_011870"/>
    </isoform>
</comment>
<comment type="tissue specificity">
    <text evidence="3">Expressed in the vascular tissues of cotyledons, leaves and hypocotyls and in stomata. Not detected in roots.</text>
</comment>
<comment type="induction">
    <text evidence="3">Circadian-regulation at the protein level, but not at the mRNA level. Strongly decreased expression during the dark phase. Accumulates at high levels at the beginning of the day.</text>
</comment>
<comment type="PTM">
    <text evidence="8">Ubiquitinated.</text>
</comment>
<evidence type="ECO:0000255" key="1">
    <source>
        <dbReference type="PROSITE-ProRule" id="PRU00071"/>
    </source>
</evidence>
<evidence type="ECO:0000256" key="2">
    <source>
        <dbReference type="SAM" id="MobiDB-lite"/>
    </source>
</evidence>
<evidence type="ECO:0000269" key="3">
    <source>
    </source>
</evidence>
<evidence type="ECO:0000269" key="4">
    <source>
    </source>
</evidence>
<evidence type="ECO:0000269" key="5">
    <source>
    </source>
</evidence>
<evidence type="ECO:0000269" key="6">
    <source>
    </source>
</evidence>
<evidence type="ECO:0000303" key="7">
    <source>
    </source>
</evidence>
<evidence type="ECO:0000305" key="8"/>
<protein>
    <recommendedName>
        <fullName>Cyclic dof factor 1</fullName>
    </recommendedName>
    <alternativeName>
        <fullName>Dof zinc finger protein DOF5.5</fullName>
        <shortName>AtDOF5.5</shortName>
    </alternativeName>
</protein>
<keyword id="KW-0002">3D-structure</keyword>
<keyword id="KW-0025">Alternative splicing</keyword>
<keyword id="KW-0238">DNA-binding</keyword>
<keyword id="KW-0287">Flowering</keyword>
<keyword id="KW-0479">Metal-binding</keyword>
<keyword id="KW-0539">Nucleus</keyword>
<keyword id="KW-1185">Reference proteome</keyword>
<keyword id="KW-0804">Transcription</keyword>
<keyword id="KW-0805">Transcription regulation</keyword>
<keyword id="KW-0832">Ubl conjugation</keyword>
<keyword id="KW-0862">Zinc</keyword>
<keyword id="KW-0863">Zinc-finger</keyword>
<dbReference type="EMBL" id="AB231333">
    <property type="protein sequence ID" value="BAE16983.1"/>
    <property type="molecule type" value="mRNA"/>
</dbReference>
<dbReference type="EMBL" id="AB015469">
    <property type="protein sequence ID" value="BAB11493.1"/>
    <property type="molecule type" value="Genomic_DNA"/>
</dbReference>
<dbReference type="EMBL" id="CP002688">
    <property type="protein sequence ID" value="AED97607.1"/>
    <property type="molecule type" value="Genomic_DNA"/>
</dbReference>
<dbReference type="EMBL" id="AF446362">
    <property type="protein sequence ID" value="AAL48235.1"/>
    <property type="molecule type" value="mRNA"/>
</dbReference>
<dbReference type="EMBL" id="AY143830">
    <property type="protein sequence ID" value="AAN28769.1"/>
    <property type="molecule type" value="mRNA"/>
</dbReference>
<dbReference type="RefSeq" id="NP_201049.3">
    <molecule id="Q8W1E3-1"/>
    <property type="nucleotide sequence ID" value="NM_125637.4"/>
</dbReference>
<dbReference type="PDB" id="8XUF">
    <property type="method" value="X-ray"/>
    <property type="resolution" value="2.30 A"/>
    <property type="chains" value="C/D=50-109"/>
</dbReference>
<dbReference type="PDBsum" id="8XUF"/>
<dbReference type="BioGRID" id="21608">
    <property type="interactions" value="9"/>
</dbReference>
<dbReference type="FunCoup" id="Q8W1E3">
    <property type="interactions" value="11"/>
</dbReference>
<dbReference type="IntAct" id="Q8W1E3">
    <property type="interactions" value="18"/>
</dbReference>
<dbReference type="STRING" id="3702.Q8W1E3"/>
<dbReference type="PaxDb" id="3702-AT5G62430.1"/>
<dbReference type="ProteomicsDB" id="222806">
    <molecule id="Q8W1E3-1"/>
</dbReference>
<dbReference type="EnsemblPlants" id="AT5G62430.1">
    <molecule id="Q8W1E3-1"/>
    <property type="protein sequence ID" value="AT5G62430.1"/>
    <property type="gene ID" value="AT5G62430"/>
</dbReference>
<dbReference type="GeneID" id="836364"/>
<dbReference type="Gramene" id="AT5G62430.1">
    <molecule id="Q8W1E3-1"/>
    <property type="protein sequence ID" value="AT5G62430.1"/>
    <property type="gene ID" value="AT5G62430"/>
</dbReference>
<dbReference type="KEGG" id="ath:AT5G62430"/>
<dbReference type="Araport" id="AT5G62430"/>
<dbReference type="TAIR" id="AT5G62430">
    <property type="gene designation" value="CDF1"/>
</dbReference>
<dbReference type="eggNOG" id="ENOG502SJI0">
    <property type="taxonomic scope" value="Eukaryota"/>
</dbReference>
<dbReference type="HOGENOM" id="CLU_030533_1_1_1"/>
<dbReference type="InParanoid" id="Q8W1E3"/>
<dbReference type="OMA" id="WPYIWSS"/>
<dbReference type="PhylomeDB" id="Q8W1E3"/>
<dbReference type="PRO" id="PR:Q8W1E3"/>
<dbReference type="Proteomes" id="UP000006548">
    <property type="component" value="Chromosome 5"/>
</dbReference>
<dbReference type="ExpressionAtlas" id="Q8W1E3">
    <property type="expression patterns" value="baseline and differential"/>
</dbReference>
<dbReference type="GO" id="GO:0005634">
    <property type="term" value="C:nucleus"/>
    <property type="evidence" value="ECO:0000314"/>
    <property type="project" value="TAIR"/>
</dbReference>
<dbReference type="GO" id="GO:0003677">
    <property type="term" value="F:DNA binding"/>
    <property type="evidence" value="ECO:0000314"/>
    <property type="project" value="TAIR"/>
</dbReference>
<dbReference type="GO" id="GO:0003700">
    <property type="term" value="F:DNA-binding transcription factor activity"/>
    <property type="evidence" value="ECO:0000314"/>
    <property type="project" value="TAIR"/>
</dbReference>
<dbReference type="GO" id="GO:0001227">
    <property type="term" value="F:DNA-binding transcription repressor activity, RNA polymerase II-specific"/>
    <property type="evidence" value="ECO:0000314"/>
    <property type="project" value="TAIR"/>
</dbReference>
<dbReference type="GO" id="GO:0000978">
    <property type="term" value="F:RNA polymerase II cis-regulatory region sequence-specific DNA binding"/>
    <property type="evidence" value="ECO:0000314"/>
    <property type="project" value="TAIR"/>
</dbReference>
<dbReference type="GO" id="GO:0008270">
    <property type="term" value="F:zinc ion binding"/>
    <property type="evidence" value="ECO:0007669"/>
    <property type="project" value="UniProtKB-KW"/>
</dbReference>
<dbReference type="GO" id="GO:0009658">
    <property type="term" value="P:chloroplast organization"/>
    <property type="evidence" value="ECO:0000315"/>
    <property type="project" value="TAIR"/>
</dbReference>
<dbReference type="GO" id="GO:0009908">
    <property type="term" value="P:flower development"/>
    <property type="evidence" value="ECO:0007669"/>
    <property type="project" value="UniProtKB-KW"/>
</dbReference>
<dbReference type="GO" id="GO:0045892">
    <property type="term" value="P:negative regulation of DNA-templated transcription"/>
    <property type="evidence" value="ECO:0000314"/>
    <property type="project" value="TAIR"/>
</dbReference>
<dbReference type="GO" id="GO:0006355">
    <property type="term" value="P:regulation of DNA-templated transcription"/>
    <property type="evidence" value="ECO:0000304"/>
    <property type="project" value="TAIR"/>
</dbReference>
<dbReference type="GO" id="GO:0048510">
    <property type="term" value="P:regulation of timing of transition from vegetative to reproductive phase"/>
    <property type="evidence" value="ECO:0000315"/>
    <property type="project" value="TAIR"/>
</dbReference>
<dbReference type="GO" id="GO:0010228">
    <property type="term" value="P:vegetative to reproductive phase transition of meristem"/>
    <property type="evidence" value="ECO:0000315"/>
    <property type="project" value="TAIR"/>
</dbReference>
<dbReference type="InterPro" id="IPR045174">
    <property type="entry name" value="Dof"/>
</dbReference>
<dbReference type="InterPro" id="IPR003851">
    <property type="entry name" value="Znf_Dof"/>
</dbReference>
<dbReference type="PANTHER" id="PTHR31089:SF51">
    <property type="entry name" value="CYCLIC DOF FACTOR 1"/>
    <property type="match status" value="1"/>
</dbReference>
<dbReference type="PANTHER" id="PTHR31089">
    <property type="entry name" value="CYCLIC DOF FACTOR 2"/>
    <property type="match status" value="1"/>
</dbReference>
<dbReference type="Pfam" id="PF02701">
    <property type="entry name" value="Zn_ribbon_Dof"/>
    <property type="match status" value="1"/>
</dbReference>
<dbReference type="PROSITE" id="PS01361">
    <property type="entry name" value="ZF_DOF_1"/>
    <property type="match status" value="1"/>
</dbReference>
<dbReference type="PROSITE" id="PS50884">
    <property type="entry name" value="ZF_DOF_2"/>
    <property type="match status" value="1"/>
</dbReference>
<gene>
    <name type="primary">CDF1</name>
    <name type="synonym">DOF5.5</name>
    <name type="ordered locus">At5g62430</name>
    <name type="ORF">K19B1.4</name>
    <name type="ORF">MMI9.24</name>
</gene>